<organism>
    <name type="scientific">Vibrio vulnificus (strain YJ016)</name>
    <dbReference type="NCBI Taxonomy" id="196600"/>
    <lineage>
        <taxon>Bacteria</taxon>
        <taxon>Pseudomonadati</taxon>
        <taxon>Pseudomonadota</taxon>
        <taxon>Gammaproteobacteria</taxon>
        <taxon>Vibrionales</taxon>
        <taxon>Vibrionaceae</taxon>
        <taxon>Vibrio</taxon>
    </lineage>
</organism>
<name>GSH1_VIBVY</name>
<evidence type="ECO:0000255" key="1">
    <source>
        <dbReference type="HAMAP-Rule" id="MF_00578"/>
    </source>
</evidence>
<feature type="chain" id="PRO_0000192545" description="Glutamate--cysteine ligase">
    <location>
        <begin position="1"/>
        <end position="525"/>
    </location>
</feature>
<gene>
    <name evidence="1" type="primary">gshA</name>
    <name type="ordered locus">VV2794</name>
</gene>
<proteinExistence type="inferred from homology"/>
<protein>
    <recommendedName>
        <fullName evidence="1">Glutamate--cysteine ligase</fullName>
        <ecNumber evidence="1">6.3.2.2</ecNumber>
    </recommendedName>
    <alternativeName>
        <fullName evidence="1">Gamma-ECS</fullName>
        <shortName evidence="1">GCS</shortName>
    </alternativeName>
    <alternativeName>
        <fullName evidence="1">Gamma-glutamylcysteine synthetase</fullName>
    </alternativeName>
</protein>
<reference key="1">
    <citation type="journal article" date="2003" name="Genome Res.">
        <title>Comparative genome analysis of Vibrio vulnificus, a marine pathogen.</title>
        <authorList>
            <person name="Chen C.-Y."/>
            <person name="Wu K.-M."/>
            <person name="Chang Y.-C."/>
            <person name="Chang C.-H."/>
            <person name="Tsai H.-C."/>
            <person name="Liao T.-L."/>
            <person name="Liu Y.-M."/>
            <person name="Chen H.-J."/>
            <person name="Shen A.B.-T."/>
            <person name="Li J.-C."/>
            <person name="Su T.-L."/>
            <person name="Shao C.-P."/>
            <person name="Lee C.-T."/>
            <person name="Hor L.-I."/>
            <person name="Tsai S.-F."/>
        </authorList>
    </citation>
    <scope>NUCLEOTIDE SEQUENCE [LARGE SCALE GENOMIC DNA]</scope>
    <source>
        <strain>YJ016</strain>
    </source>
</reference>
<dbReference type="EC" id="6.3.2.2" evidence="1"/>
<dbReference type="EMBL" id="BA000037">
    <property type="protein sequence ID" value="BAC95558.1"/>
    <property type="molecule type" value="Genomic_DNA"/>
</dbReference>
<dbReference type="SMR" id="Q7MHS5"/>
<dbReference type="STRING" id="672.VV93_v1c25050"/>
<dbReference type="KEGG" id="vvy:VV2794"/>
<dbReference type="eggNOG" id="COG2918">
    <property type="taxonomic scope" value="Bacteria"/>
</dbReference>
<dbReference type="HOGENOM" id="CLU_020728_3_0_6"/>
<dbReference type="UniPathway" id="UPA00142">
    <property type="reaction ID" value="UER00209"/>
</dbReference>
<dbReference type="Proteomes" id="UP000002675">
    <property type="component" value="Chromosome I"/>
</dbReference>
<dbReference type="GO" id="GO:0005829">
    <property type="term" value="C:cytosol"/>
    <property type="evidence" value="ECO:0007669"/>
    <property type="project" value="TreeGrafter"/>
</dbReference>
<dbReference type="GO" id="GO:0005524">
    <property type="term" value="F:ATP binding"/>
    <property type="evidence" value="ECO:0007669"/>
    <property type="project" value="UniProtKB-KW"/>
</dbReference>
<dbReference type="GO" id="GO:0004357">
    <property type="term" value="F:glutamate-cysteine ligase activity"/>
    <property type="evidence" value="ECO:0007669"/>
    <property type="project" value="UniProtKB-UniRule"/>
</dbReference>
<dbReference type="GO" id="GO:0046872">
    <property type="term" value="F:metal ion binding"/>
    <property type="evidence" value="ECO:0007669"/>
    <property type="project" value="TreeGrafter"/>
</dbReference>
<dbReference type="GO" id="GO:0006750">
    <property type="term" value="P:glutathione biosynthetic process"/>
    <property type="evidence" value="ECO:0007669"/>
    <property type="project" value="UniProtKB-UniRule"/>
</dbReference>
<dbReference type="Gene3D" id="3.30.590.20">
    <property type="match status" value="1"/>
</dbReference>
<dbReference type="HAMAP" id="MF_00578">
    <property type="entry name" value="Glu_cys_ligase"/>
    <property type="match status" value="1"/>
</dbReference>
<dbReference type="InterPro" id="IPR014746">
    <property type="entry name" value="Gln_synth/guanido_kin_cat_dom"/>
</dbReference>
<dbReference type="InterPro" id="IPR007370">
    <property type="entry name" value="Glu_cys_ligase"/>
</dbReference>
<dbReference type="InterPro" id="IPR006334">
    <property type="entry name" value="Glut_cys_ligase"/>
</dbReference>
<dbReference type="NCBIfam" id="TIGR01434">
    <property type="entry name" value="glu_cys_ligase"/>
    <property type="match status" value="1"/>
</dbReference>
<dbReference type="PANTHER" id="PTHR38761">
    <property type="entry name" value="GLUTAMATE--CYSTEINE LIGASE"/>
    <property type="match status" value="1"/>
</dbReference>
<dbReference type="PANTHER" id="PTHR38761:SF1">
    <property type="entry name" value="GLUTAMATE--CYSTEINE LIGASE"/>
    <property type="match status" value="1"/>
</dbReference>
<dbReference type="Pfam" id="PF04262">
    <property type="entry name" value="Glu_cys_ligase"/>
    <property type="match status" value="1"/>
</dbReference>
<dbReference type="SUPFAM" id="SSF55931">
    <property type="entry name" value="Glutamine synthetase/guanido kinase"/>
    <property type="match status" value="1"/>
</dbReference>
<accession>Q7MHS5</accession>
<keyword id="KW-0067">ATP-binding</keyword>
<keyword id="KW-0317">Glutathione biosynthesis</keyword>
<keyword id="KW-0436">Ligase</keyword>
<keyword id="KW-0547">Nucleotide-binding</keyword>
<comment type="catalytic activity">
    <reaction evidence="1">
        <text>L-cysteine + L-glutamate + ATP = gamma-L-glutamyl-L-cysteine + ADP + phosphate + H(+)</text>
        <dbReference type="Rhea" id="RHEA:13285"/>
        <dbReference type="ChEBI" id="CHEBI:15378"/>
        <dbReference type="ChEBI" id="CHEBI:29985"/>
        <dbReference type="ChEBI" id="CHEBI:30616"/>
        <dbReference type="ChEBI" id="CHEBI:35235"/>
        <dbReference type="ChEBI" id="CHEBI:43474"/>
        <dbReference type="ChEBI" id="CHEBI:58173"/>
        <dbReference type="ChEBI" id="CHEBI:456216"/>
        <dbReference type="EC" id="6.3.2.2"/>
    </reaction>
</comment>
<comment type="pathway">
    <text evidence="1">Sulfur metabolism; glutathione biosynthesis; glutathione from L-cysteine and L-glutamate: step 1/2.</text>
</comment>
<comment type="similarity">
    <text evidence="1">Belongs to the glutamate--cysteine ligase type 1 family. Type 1 subfamily.</text>
</comment>
<sequence>MNFILTDFAARLELVARNPEVFKQFGRGVERETLRYSQNGRIATSMHPQGLGSAFTNQWITTDFAESLLEFITPVSHDIDVLLGQLDDIHHFTQTQLGEEKMWPMSMPCYVETEDQITLAQYGSSNSAKMKTLYREGLKRRYGSLMQIISGVHFNFSFPESFWDALHGEQTAEERQATKSEAYFGLIRNYYRFGWLIPYFFGASPAMCSSFLQGRETSLPFEALGKTLYLPKATSLRLSDLGYTNSAQSVLTIGFNSIDEYLEGLSKAIRTPSAEFAKLGVKENGEYRQLNSNVLQIENELYAPIRPKRVAKNGEKPSEALARGGVEYIEVRSLDVNPFTPVGITETQVRFLDLFLTWAALSESQPMDQCELACWRENWNKVVVSGREYGLELQIGCKGEKLSLQAWAHRVFAELRQLAEVMDSAHGDNQYSLACSELEQWIDHPEKTLSAQLLTLIQQNGSLGATGCELGRAYREQNLAHHYRHFSLQQMEQEVALSLIKQSQIEQADEVDFDTYLADYFAYLK</sequence>